<comment type="function">
    <text evidence="1">Catalyzes the phosphorylation of 5-dehydro-2-deoxy-D-gluconate (2-deoxy-5-keto-D-gluconate or DKG) to 6-phospho-5-dehydro-2-deoxy-D-gluconate (DKGP).</text>
</comment>
<comment type="catalytic activity">
    <reaction evidence="1">
        <text>5-dehydro-2-deoxy-D-gluconate + ATP = 6-phospho-5-dehydro-2-deoxy-D-gluconate + ADP + H(+)</text>
        <dbReference type="Rhea" id="RHEA:13497"/>
        <dbReference type="ChEBI" id="CHEBI:15378"/>
        <dbReference type="ChEBI" id="CHEBI:16669"/>
        <dbReference type="ChEBI" id="CHEBI:30616"/>
        <dbReference type="ChEBI" id="CHEBI:57949"/>
        <dbReference type="ChEBI" id="CHEBI:456216"/>
        <dbReference type="EC" id="2.7.1.92"/>
    </reaction>
</comment>
<comment type="pathway">
    <text evidence="1">Polyol metabolism; myo-inositol degradation into acetyl-CoA; acetyl-CoA from myo-inositol: step 5/7.</text>
</comment>
<comment type="similarity">
    <text evidence="1">Belongs to the carbohydrate kinase PfkB family.</text>
</comment>
<evidence type="ECO:0000255" key="1">
    <source>
        <dbReference type="HAMAP-Rule" id="MF_01668"/>
    </source>
</evidence>
<protein>
    <recommendedName>
        <fullName evidence="1">5-dehydro-2-deoxygluconokinase</fullName>
        <ecNumber evidence="1">2.7.1.92</ecNumber>
    </recommendedName>
    <alternativeName>
        <fullName evidence="1">2-deoxy-5-keto-D-gluconate kinase</fullName>
        <shortName evidence="1">DKG kinase</shortName>
    </alternativeName>
</protein>
<organism>
    <name type="scientific">Listeria monocytogenes serotype 4b (strain CLIP80459)</name>
    <dbReference type="NCBI Taxonomy" id="568819"/>
    <lineage>
        <taxon>Bacteria</taxon>
        <taxon>Bacillati</taxon>
        <taxon>Bacillota</taxon>
        <taxon>Bacilli</taxon>
        <taxon>Bacillales</taxon>
        <taxon>Listeriaceae</taxon>
        <taxon>Listeria</taxon>
    </lineage>
</organism>
<proteinExistence type="inferred from homology"/>
<keyword id="KW-0067">ATP-binding</keyword>
<keyword id="KW-0418">Kinase</keyword>
<keyword id="KW-0547">Nucleotide-binding</keyword>
<keyword id="KW-0808">Transferase</keyword>
<reference key="1">
    <citation type="journal article" date="2012" name="BMC Genomics">
        <title>Comparative genomics and transcriptomics of lineages I, II, and III strains of Listeria monocytogenes.</title>
        <authorList>
            <person name="Hain T."/>
            <person name="Ghai R."/>
            <person name="Billion A."/>
            <person name="Kuenne C.T."/>
            <person name="Steinweg C."/>
            <person name="Izar B."/>
            <person name="Mohamed W."/>
            <person name="Mraheil M."/>
            <person name="Domann E."/>
            <person name="Schaffrath S."/>
            <person name="Karst U."/>
            <person name="Goesmann A."/>
            <person name="Oehm S."/>
            <person name="Puhler A."/>
            <person name="Merkl R."/>
            <person name="Vorwerk S."/>
            <person name="Glaser P."/>
            <person name="Garrido P."/>
            <person name="Rusniok C."/>
            <person name="Buchrieser C."/>
            <person name="Goebel W."/>
            <person name="Chakraborty T."/>
        </authorList>
    </citation>
    <scope>NUCLEOTIDE SEQUENCE [LARGE SCALE GENOMIC DNA]</scope>
    <source>
        <strain>CLIP80459</strain>
    </source>
</reference>
<gene>
    <name evidence="1" type="primary">iolC</name>
    <name type="ordered locus">Lm4b_00403</name>
</gene>
<feature type="chain" id="PRO_1000215881" description="5-dehydro-2-deoxygluconokinase">
    <location>
        <begin position="1"/>
        <end position="325"/>
    </location>
</feature>
<sequence>MNLNKHSERKFDLITVGRACIDLNAVEYNRPMEETMTFSKYVGGSPANIAIGTAKLGLKVGFIGKISADQHGRFIEKYMRDLSINTDGMVKDTEGRKVGLAFTEIKSPDECSILMYRENVADLYLTPEEISEDYIKEARVLLISGTALAQSPSREAVLKAVSLARKNDVAVAFELDYRPYTWTNTEETAVYYSLVAEQADVIIGTRDEFDMMENQVGGKNEATKAHLFQHQAEIVVIKHGVEGSFAYTKAGETFQAKAYKTKVLKTFGAGDSYASAFLYGLFSGESIETALKYGSAAASIVVSKHSSSDAMPTADEIKALIAQAE</sequence>
<accession>C1KZA1</accession>
<name>IOLC_LISMC</name>
<dbReference type="EC" id="2.7.1.92" evidence="1"/>
<dbReference type="EMBL" id="FM242711">
    <property type="protein sequence ID" value="CAS04171.1"/>
    <property type="molecule type" value="Genomic_DNA"/>
</dbReference>
<dbReference type="RefSeq" id="WP_003734601.1">
    <property type="nucleotide sequence ID" value="NC_012488.1"/>
</dbReference>
<dbReference type="SMR" id="C1KZA1"/>
<dbReference type="KEGG" id="lmc:Lm4b_00403"/>
<dbReference type="HOGENOM" id="CLU_027634_6_0_9"/>
<dbReference type="UniPathway" id="UPA00076">
    <property type="reaction ID" value="UER00146"/>
</dbReference>
<dbReference type="GO" id="GO:0047590">
    <property type="term" value="F:5-dehydro-2-deoxygluconokinase activity"/>
    <property type="evidence" value="ECO:0007669"/>
    <property type="project" value="UniProtKB-UniRule"/>
</dbReference>
<dbReference type="GO" id="GO:0005524">
    <property type="term" value="F:ATP binding"/>
    <property type="evidence" value="ECO:0007669"/>
    <property type="project" value="UniProtKB-UniRule"/>
</dbReference>
<dbReference type="GO" id="GO:0019310">
    <property type="term" value="P:inositol catabolic process"/>
    <property type="evidence" value="ECO:0007669"/>
    <property type="project" value="UniProtKB-UniRule"/>
</dbReference>
<dbReference type="CDD" id="cd01166">
    <property type="entry name" value="KdgK"/>
    <property type="match status" value="1"/>
</dbReference>
<dbReference type="Gene3D" id="3.40.1190.20">
    <property type="match status" value="1"/>
</dbReference>
<dbReference type="Gene3D" id="2.20.150.10">
    <property type="entry name" value="putative 5-dehydro-2- deoxygluconokinase"/>
    <property type="match status" value="1"/>
</dbReference>
<dbReference type="HAMAP" id="MF_01668">
    <property type="entry name" value="IolC"/>
    <property type="match status" value="1"/>
</dbReference>
<dbReference type="InterPro" id="IPR002173">
    <property type="entry name" value="Carboh/pur_kinase_PfkB_CS"/>
</dbReference>
<dbReference type="InterPro" id="IPR022841">
    <property type="entry name" value="DKG_kinase_firmi"/>
</dbReference>
<dbReference type="InterPro" id="IPR030830">
    <property type="entry name" value="Myo_inos_IolC"/>
</dbReference>
<dbReference type="InterPro" id="IPR023314">
    <property type="entry name" value="Myo_inos_IolC-like_sf"/>
</dbReference>
<dbReference type="InterPro" id="IPR050306">
    <property type="entry name" value="PfkB_Carbo_kinase"/>
</dbReference>
<dbReference type="InterPro" id="IPR011611">
    <property type="entry name" value="PfkB_dom"/>
</dbReference>
<dbReference type="InterPro" id="IPR029056">
    <property type="entry name" value="Ribokinase-like"/>
</dbReference>
<dbReference type="NCBIfam" id="TIGR04382">
    <property type="entry name" value="myo_inos_iolC_N"/>
    <property type="match status" value="1"/>
</dbReference>
<dbReference type="PANTHER" id="PTHR43085:SF49">
    <property type="entry name" value="5-DEHYDRO-2-DEOXYGLUCONOKINASE"/>
    <property type="match status" value="1"/>
</dbReference>
<dbReference type="PANTHER" id="PTHR43085">
    <property type="entry name" value="HEXOKINASE FAMILY MEMBER"/>
    <property type="match status" value="1"/>
</dbReference>
<dbReference type="Pfam" id="PF00294">
    <property type="entry name" value="PfkB"/>
    <property type="match status" value="1"/>
</dbReference>
<dbReference type="SUPFAM" id="SSF53613">
    <property type="entry name" value="Ribokinase-like"/>
    <property type="match status" value="1"/>
</dbReference>
<dbReference type="PROSITE" id="PS00584">
    <property type="entry name" value="PFKB_KINASES_2"/>
    <property type="match status" value="1"/>
</dbReference>